<proteinExistence type="inferred from homology"/>
<accession>Q2IPZ5</accession>
<keyword id="KW-0963">Cytoplasm</keyword>
<keyword id="KW-1185">Reference proteome</keyword>
<keyword id="KW-0690">Ribosome biogenesis</keyword>
<organism>
    <name type="scientific">Anaeromyxobacter dehalogenans (strain 2CP-C)</name>
    <dbReference type="NCBI Taxonomy" id="290397"/>
    <lineage>
        <taxon>Bacteria</taxon>
        <taxon>Pseudomonadati</taxon>
        <taxon>Myxococcota</taxon>
        <taxon>Myxococcia</taxon>
        <taxon>Myxococcales</taxon>
        <taxon>Cystobacterineae</taxon>
        <taxon>Anaeromyxobacteraceae</taxon>
        <taxon>Anaeromyxobacter</taxon>
    </lineage>
</organism>
<reference key="1">
    <citation type="submission" date="2006-01" db="EMBL/GenBank/DDBJ databases">
        <title>Complete sequence of Anaeromyxobacter dehalogenans 2CP-C.</title>
        <authorList>
            <person name="Copeland A."/>
            <person name="Lucas S."/>
            <person name="Lapidus A."/>
            <person name="Barry K."/>
            <person name="Detter J.C."/>
            <person name="Glavina T."/>
            <person name="Hammon N."/>
            <person name="Israni S."/>
            <person name="Pitluck S."/>
            <person name="Brettin T."/>
            <person name="Bruce D."/>
            <person name="Han C."/>
            <person name="Tapia R."/>
            <person name="Gilna P."/>
            <person name="Kiss H."/>
            <person name="Schmutz J."/>
            <person name="Larimer F."/>
            <person name="Land M."/>
            <person name="Kyrpides N."/>
            <person name="Anderson I."/>
            <person name="Sanford R.A."/>
            <person name="Ritalahti K.M."/>
            <person name="Thomas H.S."/>
            <person name="Kirby J.R."/>
            <person name="Zhulin I.B."/>
            <person name="Loeffler F.E."/>
            <person name="Richardson P."/>
        </authorList>
    </citation>
    <scope>NUCLEOTIDE SEQUENCE [LARGE SCALE GENOMIC DNA]</scope>
    <source>
        <strain>2CP-C</strain>
    </source>
</reference>
<comment type="function">
    <text evidence="1">One of several proteins that assist in the late maturation steps of the functional core of the 30S ribosomal subunit. Associates with free 30S ribosomal subunits (but not with 30S subunits that are part of 70S ribosomes or polysomes). Required for efficient processing of 16S rRNA. May interact with the 5'-terminal helix region of 16S rRNA.</text>
</comment>
<comment type="subunit">
    <text evidence="1">Monomer. Binds 30S ribosomal subunits, but not 50S ribosomal subunits or 70S ribosomes.</text>
</comment>
<comment type="subcellular location">
    <subcellularLocation>
        <location evidence="1">Cytoplasm</location>
    </subcellularLocation>
</comment>
<comment type="similarity">
    <text evidence="1">Belongs to the RbfA family.</text>
</comment>
<sequence length="138" mass="15334">MTTHNRPARVAEEFRHELSALLARGLKDPRITGFVTVTGSKMSPDLKEATVYVSIHGDERVRKDTFAGLQAAAGFLQREVSRALRLRNTPHLRFVYDESVARGDRIERLLREARTQGQEPAADVEPAPGAAPDDEAEE</sequence>
<gene>
    <name evidence="1" type="primary">rbfA</name>
    <name type="ordered locus">Adeh_1104</name>
</gene>
<evidence type="ECO:0000255" key="1">
    <source>
        <dbReference type="HAMAP-Rule" id="MF_00003"/>
    </source>
</evidence>
<evidence type="ECO:0000256" key="2">
    <source>
        <dbReference type="SAM" id="MobiDB-lite"/>
    </source>
</evidence>
<feature type="chain" id="PRO_1000000065" description="Ribosome-binding factor A">
    <location>
        <begin position="1"/>
        <end position="138"/>
    </location>
</feature>
<feature type="region of interest" description="Disordered" evidence="2">
    <location>
        <begin position="112"/>
        <end position="138"/>
    </location>
</feature>
<feature type="compositionally biased region" description="Low complexity" evidence="2">
    <location>
        <begin position="119"/>
        <end position="131"/>
    </location>
</feature>
<name>RBFA_ANADE</name>
<dbReference type="EMBL" id="CP000251">
    <property type="protein sequence ID" value="ABC80879.1"/>
    <property type="molecule type" value="Genomic_DNA"/>
</dbReference>
<dbReference type="RefSeq" id="WP_011420162.1">
    <property type="nucleotide sequence ID" value="NC_007760.1"/>
</dbReference>
<dbReference type="SMR" id="Q2IPZ5"/>
<dbReference type="STRING" id="290397.Adeh_1104"/>
<dbReference type="KEGG" id="ade:Adeh_1104"/>
<dbReference type="eggNOG" id="COG0858">
    <property type="taxonomic scope" value="Bacteria"/>
</dbReference>
<dbReference type="HOGENOM" id="CLU_089475_6_3_7"/>
<dbReference type="OrthoDB" id="307788at2"/>
<dbReference type="Proteomes" id="UP000001935">
    <property type="component" value="Chromosome"/>
</dbReference>
<dbReference type="GO" id="GO:0005829">
    <property type="term" value="C:cytosol"/>
    <property type="evidence" value="ECO:0007669"/>
    <property type="project" value="TreeGrafter"/>
</dbReference>
<dbReference type="GO" id="GO:0043024">
    <property type="term" value="F:ribosomal small subunit binding"/>
    <property type="evidence" value="ECO:0007669"/>
    <property type="project" value="TreeGrafter"/>
</dbReference>
<dbReference type="GO" id="GO:0030490">
    <property type="term" value="P:maturation of SSU-rRNA"/>
    <property type="evidence" value="ECO:0007669"/>
    <property type="project" value="UniProtKB-UniRule"/>
</dbReference>
<dbReference type="Gene3D" id="3.30.300.20">
    <property type="match status" value="1"/>
</dbReference>
<dbReference type="HAMAP" id="MF_00003">
    <property type="entry name" value="RbfA"/>
    <property type="match status" value="1"/>
</dbReference>
<dbReference type="InterPro" id="IPR015946">
    <property type="entry name" value="KH_dom-like_a/b"/>
</dbReference>
<dbReference type="InterPro" id="IPR000238">
    <property type="entry name" value="RbfA"/>
</dbReference>
<dbReference type="InterPro" id="IPR023799">
    <property type="entry name" value="RbfA_dom_sf"/>
</dbReference>
<dbReference type="InterPro" id="IPR020053">
    <property type="entry name" value="Ribosome-bd_factorA_CS"/>
</dbReference>
<dbReference type="NCBIfam" id="TIGR00082">
    <property type="entry name" value="rbfA"/>
    <property type="match status" value="1"/>
</dbReference>
<dbReference type="PANTHER" id="PTHR33515">
    <property type="entry name" value="RIBOSOME-BINDING FACTOR A, CHLOROPLASTIC-RELATED"/>
    <property type="match status" value="1"/>
</dbReference>
<dbReference type="PANTHER" id="PTHR33515:SF1">
    <property type="entry name" value="RIBOSOME-BINDING FACTOR A, CHLOROPLASTIC-RELATED"/>
    <property type="match status" value="1"/>
</dbReference>
<dbReference type="Pfam" id="PF02033">
    <property type="entry name" value="RBFA"/>
    <property type="match status" value="1"/>
</dbReference>
<dbReference type="SUPFAM" id="SSF89919">
    <property type="entry name" value="Ribosome-binding factor A, RbfA"/>
    <property type="match status" value="1"/>
</dbReference>
<dbReference type="PROSITE" id="PS01319">
    <property type="entry name" value="RBFA"/>
    <property type="match status" value="1"/>
</dbReference>
<protein>
    <recommendedName>
        <fullName evidence="1">Ribosome-binding factor A</fullName>
    </recommendedName>
</protein>